<reference key="1">
    <citation type="journal article" date="2004" name="Curr. Genet.">
        <title>Structural features and transcript-editing analysis of sugarcane (Saccharum officinarum L.) chloroplast genome.</title>
        <authorList>
            <person name="Calsa T. Jr."/>
            <person name="Carraro D.M."/>
            <person name="Benatti M.R."/>
            <person name="Barbosa A.C."/>
            <person name="Kitajima J.P."/>
            <person name="Carrer H."/>
        </authorList>
    </citation>
    <scope>NUCLEOTIDE SEQUENCE [LARGE SCALE GENOMIC DNA]</scope>
    <source>
        <strain>cv. SP-80-3280</strain>
    </source>
</reference>
<comment type="function">
    <text evidence="1">Protein S19 forms a complex with S13 that binds strongly to the 16S ribosomal RNA.</text>
</comment>
<comment type="subcellular location">
    <subcellularLocation>
        <location>Plastid</location>
        <location>Chloroplast</location>
    </subcellularLocation>
</comment>
<comment type="similarity">
    <text evidence="1">Belongs to the universal ribosomal protein uS19 family.</text>
</comment>
<dbReference type="EMBL" id="AE009947">
    <property type="protein sequence ID" value="AAT44635.1"/>
    <property type="molecule type" value="Genomic_DNA"/>
</dbReference>
<dbReference type="EMBL" id="AE009947">
    <property type="protein sequence ID" value="AAT44676.1"/>
    <property type="molecule type" value="Genomic_DNA"/>
</dbReference>
<dbReference type="SMR" id="Q6L3B6"/>
<dbReference type="GO" id="GO:0009507">
    <property type="term" value="C:chloroplast"/>
    <property type="evidence" value="ECO:0007669"/>
    <property type="project" value="UniProtKB-SubCell"/>
</dbReference>
<dbReference type="GO" id="GO:0005763">
    <property type="term" value="C:mitochondrial small ribosomal subunit"/>
    <property type="evidence" value="ECO:0007669"/>
    <property type="project" value="TreeGrafter"/>
</dbReference>
<dbReference type="GO" id="GO:0019843">
    <property type="term" value="F:rRNA binding"/>
    <property type="evidence" value="ECO:0007669"/>
    <property type="project" value="UniProtKB-UniRule"/>
</dbReference>
<dbReference type="GO" id="GO:0003735">
    <property type="term" value="F:structural constituent of ribosome"/>
    <property type="evidence" value="ECO:0007669"/>
    <property type="project" value="InterPro"/>
</dbReference>
<dbReference type="GO" id="GO:0000028">
    <property type="term" value="P:ribosomal small subunit assembly"/>
    <property type="evidence" value="ECO:0007669"/>
    <property type="project" value="TreeGrafter"/>
</dbReference>
<dbReference type="GO" id="GO:0006412">
    <property type="term" value="P:translation"/>
    <property type="evidence" value="ECO:0007669"/>
    <property type="project" value="UniProtKB-UniRule"/>
</dbReference>
<dbReference type="FunFam" id="3.30.860.10:FF:000001">
    <property type="entry name" value="30S ribosomal protein S19"/>
    <property type="match status" value="1"/>
</dbReference>
<dbReference type="Gene3D" id="3.30.860.10">
    <property type="entry name" value="30s Ribosomal Protein S19, Chain A"/>
    <property type="match status" value="1"/>
</dbReference>
<dbReference type="HAMAP" id="MF_00531">
    <property type="entry name" value="Ribosomal_uS19"/>
    <property type="match status" value="1"/>
</dbReference>
<dbReference type="InterPro" id="IPR002222">
    <property type="entry name" value="Ribosomal_uS19"/>
</dbReference>
<dbReference type="InterPro" id="IPR005732">
    <property type="entry name" value="Ribosomal_uS19_bac-type"/>
</dbReference>
<dbReference type="InterPro" id="IPR020934">
    <property type="entry name" value="Ribosomal_uS19_CS"/>
</dbReference>
<dbReference type="InterPro" id="IPR023575">
    <property type="entry name" value="Ribosomal_uS19_SF"/>
</dbReference>
<dbReference type="NCBIfam" id="TIGR01050">
    <property type="entry name" value="rpsS_bact"/>
    <property type="match status" value="1"/>
</dbReference>
<dbReference type="PANTHER" id="PTHR11880">
    <property type="entry name" value="RIBOSOMAL PROTEIN S19P FAMILY MEMBER"/>
    <property type="match status" value="1"/>
</dbReference>
<dbReference type="PANTHER" id="PTHR11880:SF8">
    <property type="entry name" value="SMALL RIBOSOMAL SUBUNIT PROTEIN US19M"/>
    <property type="match status" value="1"/>
</dbReference>
<dbReference type="Pfam" id="PF00203">
    <property type="entry name" value="Ribosomal_S19"/>
    <property type="match status" value="1"/>
</dbReference>
<dbReference type="PIRSF" id="PIRSF002144">
    <property type="entry name" value="Ribosomal_S19"/>
    <property type="match status" value="1"/>
</dbReference>
<dbReference type="PRINTS" id="PR00975">
    <property type="entry name" value="RIBOSOMALS19"/>
</dbReference>
<dbReference type="SUPFAM" id="SSF54570">
    <property type="entry name" value="Ribosomal protein S19"/>
    <property type="match status" value="1"/>
</dbReference>
<dbReference type="PROSITE" id="PS00323">
    <property type="entry name" value="RIBOSOMAL_S19"/>
    <property type="match status" value="1"/>
</dbReference>
<protein>
    <recommendedName>
        <fullName evidence="1">Small ribosomal subunit protein uS19c</fullName>
    </recommendedName>
    <alternativeName>
        <fullName evidence="2">30S ribosomal protein S19, chloroplastic</fullName>
    </alternativeName>
</protein>
<accession>Q6L3B6</accession>
<gene>
    <name evidence="1" type="primary">rps19-A</name>
    <name type="ordered locus">PS005</name>
</gene>
<gene>
    <name evidence="1" type="primary">rps19-B</name>
    <name type="ordered locus">PS081</name>
</gene>
<evidence type="ECO:0000255" key="1">
    <source>
        <dbReference type="HAMAP-Rule" id="MF_00531"/>
    </source>
</evidence>
<evidence type="ECO:0000305" key="2"/>
<sequence>MTRKKTNPFVARHLLAKIEKVNMKEEKEIIVTWSRASSILPAMVGHTIAIHNGKEHIPIYITNPMVGRKLGEFVPTRHFTSYESTRKDTKSRR</sequence>
<geneLocation type="chloroplast"/>
<name>RR19_SACHY</name>
<feature type="chain" id="PRO_0000129988" description="Small ribosomal subunit protein uS19c">
    <location>
        <begin position="1"/>
        <end position="93"/>
    </location>
</feature>
<organism>
    <name type="scientific">Saccharum hybrid</name>
    <name type="common">Sugarcane</name>
    <dbReference type="NCBI Taxonomy" id="15819"/>
    <lineage>
        <taxon>Eukaryota</taxon>
        <taxon>Viridiplantae</taxon>
        <taxon>Streptophyta</taxon>
        <taxon>Embryophyta</taxon>
        <taxon>Tracheophyta</taxon>
        <taxon>Spermatophyta</taxon>
        <taxon>Magnoliopsida</taxon>
        <taxon>Liliopsida</taxon>
        <taxon>Poales</taxon>
        <taxon>Poaceae</taxon>
        <taxon>PACMAD clade</taxon>
        <taxon>Panicoideae</taxon>
        <taxon>Andropogonodae</taxon>
        <taxon>Andropogoneae</taxon>
        <taxon>Saccharinae</taxon>
        <taxon>Saccharum</taxon>
    </lineage>
</organism>
<proteinExistence type="inferred from homology"/>
<keyword id="KW-0150">Chloroplast</keyword>
<keyword id="KW-0934">Plastid</keyword>
<keyword id="KW-0687">Ribonucleoprotein</keyword>
<keyword id="KW-0689">Ribosomal protein</keyword>
<keyword id="KW-0694">RNA-binding</keyword>
<keyword id="KW-0699">rRNA-binding</keyword>